<gene>
    <name evidence="1" type="primary">metN</name>
    <name type="ordered locus">Cj0774c</name>
</gene>
<protein>
    <recommendedName>
        <fullName evidence="1">Methionine import ATP-binding protein MetN</fullName>
        <ecNumber evidence="1">7.4.2.11</ecNumber>
    </recommendedName>
</protein>
<sequence>MIKIKNLKKYYGKELVINDVSLEIKKGEIYAIVGHSGAGKSTLLRCINGLENYQEGSLKVFDQEIKDLSQKKSKELRMLRKDIGMIFQNFALMERKNVFENVAMPLRTHYTQCKFHAKLFNKEYMSEKEIAQKVNSLLEIVGLDHKNKSYPRELSGGQKQRVAIARALALNPKILLSDEATSALDPNTTKNILELISKINAEFGITVVLVTHEMDVVKDIAQKALLLEHGQIIGSGAIDELFLRPNAKMKEFLGESDFLPEHGLNIKLYFPKEVAQNSVITHMARTLNIDFNIVWGKIEKLNGKALGNLVININEKDKDKVLDYIEKSGVLWEVAS</sequence>
<organism>
    <name type="scientific">Campylobacter jejuni subsp. jejuni serotype O:2 (strain ATCC 700819 / NCTC 11168)</name>
    <dbReference type="NCBI Taxonomy" id="192222"/>
    <lineage>
        <taxon>Bacteria</taxon>
        <taxon>Pseudomonadati</taxon>
        <taxon>Campylobacterota</taxon>
        <taxon>Epsilonproteobacteria</taxon>
        <taxon>Campylobacterales</taxon>
        <taxon>Campylobacteraceae</taxon>
        <taxon>Campylobacter</taxon>
    </lineage>
</organism>
<reference key="1">
    <citation type="journal article" date="2000" name="Nature">
        <title>The genome sequence of the food-borne pathogen Campylobacter jejuni reveals hypervariable sequences.</title>
        <authorList>
            <person name="Parkhill J."/>
            <person name="Wren B.W."/>
            <person name="Mungall K.L."/>
            <person name="Ketley J.M."/>
            <person name="Churcher C.M."/>
            <person name="Basham D."/>
            <person name="Chillingworth T."/>
            <person name="Davies R.M."/>
            <person name="Feltwell T."/>
            <person name="Holroyd S."/>
            <person name="Jagels K."/>
            <person name="Karlyshev A.V."/>
            <person name="Moule S."/>
            <person name="Pallen M.J."/>
            <person name="Penn C.W."/>
            <person name="Quail M.A."/>
            <person name="Rajandream M.A."/>
            <person name="Rutherford K.M."/>
            <person name="van Vliet A.H.M."/>
            <person name="Whitehead S."/>
            <person name="Barrell B.G."/>
        </authorList>
    </citation>
    <scope>NUCLEOTIDE SEQUENCE [LARGE SCALE GENOMIC DNA]</scope>
    <source>
        <strain>ATCC 700819 / NCTC 11168</strain>
    </source>
</reference>
<dbReference type="EC" id="7.4.2.11" evidence="1"/>
<dbReference type="EMBL" id="AL111168">
    <property type="protein sequence ID" value="CAL34902.1"/>
    <property type="molecule type" value="Genomic_DNA"/>
</dbReference>
<dbReference type="PIR" id="F81348">
    <property type="entry name" value="F81348"/>
</dbReference>
<dbReference type="RefSeq" id="WP_002852619.1">
    <property type="nucleotide sequence ID" value="NZ_SZUC01000001.1"/>
</dbReference>
<dbReference type="RefSeq" id="YP_002344181.1">
    <property type="nucleotide sequence ID" value="NC_002163.1"/>
</dbReference>
<dbReference type="SMR" id="Q0PAB6"/>
<dbReference type="STRING" id="192222.Cj0774c"/>
<dbReference type="PaxDb" id="192222-Cj0774c"/>
<dbReference type="EnsemblBacteria" id="CAL34902">
    <property type="protein sequence ID" value="CAL34902"/>
    <property type="gene ID" value="Cj0774c"/>
</dbReference>
<dbReference type="GeneID" id="905084"/>
<dbReference type="KEGG" id="cje:Cj0774c"/>
<dbReference type="PATRIC" id="fig|192222.6.peg.762"/>
<dbReference type="eggNOG" id="COG1135">
    <property type="taxonomic scope" value="Bacteria"/>
</dbReference>
<dbReference type="HOGENOM" id="CLU_000604_1_3_7"/>
<dbReference type="OrthoDB" id="9809450at2"/>
<dbReference type="Proteomes" id="UP000000799">
    <property type="component" value="Chromosome"/>
</dbReference>
<dbReference type="GO" id="GO:0005886">
    <property type="term" value="C:plasma membrane"/>
    <property type="evidence" value="ECO:0007669"/>
    <property type="project" value="UniProtKB-SubCell"/>
</dbReference>
<dbReference type="GO" id="GO:0033232">
    <property type="term" value="F:ABC-type D-methionine transporter activity"/>
    <property type="evidence" value="ECO:0007669"/>
    <property type="project" value="UniProtKB-EC"/>
</dbReference>
<dbReference type="GO" id="GO:0005524">
    <property type="term" value="F:ATP binding"/>
    <property type="evidence" value="ECO:0007669"/>
    <property type="project" value="UniProtKB-KW"/>
</dbReference>
<dbReference type="GO" id="GO:0016887">
    <property type="term" value="F:ATP hydrolysis activity"/>
    <property type="evidence" value="ECO:0007669"/>
    <property type="project" value="InterPro"/>
</dbReference>
<dbReference type="FunFam" id="3.40.50.300:FF:000056">
    <property type="entry name" value="Cell division ATP-binding protein FtsE"/>
    <property type="match status" value="1"/>
</dbReference>
<dbReference type="Gene3D" id="3.30.70.260">
    <property type="match status" value="1"/>
</dbReference>
<dbReference type="Gene3D" id="3.40.50.300">
    <property type="entry name" value="P-loop containing nucleotide triphosphate hydrolases"/>
    <property type="match status" value="1"/>
</dbReference>
<dbReference type="InterPro" id="IPR003593">
    <property type="entry name" value="AAA+_ATPase"/>
</dbReference>
<dbReference type="InterPro" id="IPR003439">
    <property type="entry name" value="ABC_transporter-like_ATP-bd"/>
</dbReference>
<dbReference type="InterPro" id="IPR017871">
    <property type="entry name" value="ABC_transporter-like_CS"/>
</dbReference>
<dbReference type="InterPro" id="IPR045865">
    <property type="entry name" value="ACT-like_dom_sf"/>
</dbReference>
<dbReference type="InterPro" id="IPR050086">
    <property type="entry name" value="MetN_ABC_transporter-like"/>
</dbReference>
<dbReference type="InterPro" id="IPR018449">
    <property type="entry name" value="NIL_domain"/>
</dbReference>
<dbReference type="InterPro" id="IPR027417">
    <property type="entry name" value="P-loop_NTPase"/>
</dbReference>
<dbReference type="PANTHER" id="PTHR43166">
    <property type="entry name" value="AMINO ACID IMPORT ATP-BINDING PROTEIN"/>
    <property type="match status" value="1"/>
</dbReference>
<dbReference type="PANTHER" id="PTHR43166:SF30">
    <property type="entry name" value="METHIONINE IMPORT ATP-BINDING PROTEIN METN"/>
    <property type="match status" value="1"/>
</dbReference>
<dbReference type="Pfam" id="PF00005">
    <property type="entry name" value="ABC_tran"/>
    <property type="match status" value="1"/>
</dbReference>
<dbReference type="Pfam" id="PF09383">
    <property type="entry name" value="NIL"/>
    <property type="match status" value="1"/>
</dbReference>
<dbReference type="SMART" id="SM00382">
    <property type="entry name" value="AAA"/>
    <property type="match status" value="1"/>
</dbReference>
<dbReference type="SMART" id="SM00930">
    <property type="entry name" value="NIL"/>
    <property type="match status" value="1"/>
</dbReference>
<dbReference type="SUPFAM" id="SSF55021">
    <property type="entry name" value="ACT-like"/>
    <property type="match status" value="1"/>
</dbReference>
<dbReference type="SUPFAM" id="SSF52540">
    <property type="entry name" value="P-loop containing nucleoside triphosphate hydrolases"/>
    <property type="match status" value="1"/>
</dbReference>
<dbReference type="PROSITE" id="PS00211">
    <property type="entry name" value="ABC_TRANSPORTER_1"/>
    <property type="match status" value="1"/>
</dbReference>
<dbReference type="PROSITE" id="PS50893">
    <property type="entry name" value="ABC_TRANSPORTER_2"/>
    <property type="match status" value="1"/>
</dbReference>
<dbReference type="PROSITE" id="PS51264">
    <property type="entry name" value="METN"/>
    <property type="match status" value="1"/>
</dbReference>
<accession>Q0PAB6</accession>
<proteinExistence type="inferred from homology"/>
<feature type="chain" id="PRO_0000270274" description="Methionine import ATP-binding protein MetN">
    <location>
        <begin position="1"/>
        <end position="336"/>
    </location>
</feature>
<feature type="domain" description="ABC transporter" evidence="1">
    <location>
        <begin position="2"/>
        <end position="254"/>
    </location>
</feature>
<feature type="binding site" evidence="1">
    <location>
        <begin position="34"/>
        <end position="41"/>
    </location>
    <ligand>
        <name>ATP</name>
        <dbReference type="ChEBI" id="CHEBI:30616"/>
    </ligand>
</feature>
<keyword id="KW-0029">Amino-acid transport</keyword>
<keyword id="KW-0067">ATP-binding</keyword>
<keyword id="KW-0997">Cell inner membrane</keyword>
<keyword id="KW-1003">Cell membrane</keyword>
<keyword id="KW-0472">Membrane</keyword>
<keyword id="KW-0547">Nucleotide-binding</keyword>
<keyword id="KW-1185">Reference proteome</keyword>
<keyword id="KW-1278">Translocase</keyword>
<keyword id="KW-0813">Transport</keyword>
<comment type="function">
    <text evidence="1">Part of the ABC transporter complex MetNIQ involved in methionine import. Responsible for energy coupling to the transport system.</text>
</comment>
<comment type="catalytic activity">
    <reaction evidence="1">
        <text>L-methionine(out) + ATP + H2O = L-methionine(in) + ADP + phosphate + H(+)</text>
        <dbReference type="Rhea" id="RHEA:29779"/>
        <dbReference type="ChEBI" id="CHEBI:15377"/>
        <dbReference type="ChEBI" id="CHEBI:15378"/>
        <dbReference type="ChEBI" id="CHEBI:30616"/>
        <dbReference type="ChEBI" id="CHEBI:43474"/>
        <dbReference type="ChEBI" id="CHEBI:57844"/>
        <dbReference type="ChEBI" id="CHEBI:456216"/>
        <dbReference type="EC" id="7.4.2.11"/>
    </reaction>
</comment>
<comment type="catalytic activity">
    <reaction evidence="1">
        <text>D-methionine(out) + ATP + H2O = D-methionine(in) + ADP + phosphate + H(+)</text>
        <dbReference type="Rhea" id="RHEA:29767"/>
        <dbReference type="ChEBI" id="CHEBI:15377"/>
        <dbReference type="ChEBI" id="CHEBI:15378"/>
        <dbReference type="ChEBI" id="CHEBI:30616"/>
        <dbReference type="ChEBI" id="CHEBI:43474"/>
        <dbReference type="ChEBI" id="CHEBI:57932"/>
        <dbReference type="ChEBI" id="CHEBI:456216"/>
        <dbReference type="EC" id="7.4.2.11"/>
    </reaction>
</comment>
<comment type="subunit">
    <text evidence="1">The complex is composed of two ATP-binding proteins (MetN), two transmembrane proteins (MetI) and a solute-binding protein (MetQ).</text>
</comment>
<comment type="subcellular location">
    <subcellularLocation>
        <location evidence="1">Cell inner membrane</location>
        <topology evidence="1">Peripheral membrane protein</topology>
    </subcellularLocation>
</comment>
<comment type="similarity">
    <text evidence="1">Belongs to the ABC transporter superfamily. Methionine importer (TC 3.A.1.24) family.</text>
</comment>
<evidence type="ECO:0000255" key="1">
    <source>
        <dbReference type="HAMAP-Rule" id="MF_01719"/>
    </source>
</evidence>
<name>METN_CAMJE</name>